<evidence type="ECO:0000255" key="1">
    <source>
        <dbReference type="HAMAP-Rule" id="MF_00158"/>
    </source>
</evidence>
<accession>A1WBI8</accession>
<proteinExistence type="inferred from homology"/>
<reference key="1">
    <citation type="submission" date="2006-12" db="EMBL/GenBank/DDBJ databases">
        <title>Complete sequence of chromosome 1 of Acidovorax sp. JS42.</title>
        <authorList>
            <person name="Copeland A."/>
            <person name="Lucas S."/>
            <person name="Lapidus A."/>
            <person name="Barry K."/>
            <person name="Detter J.C."/>
            <person name="Glavina del Rio T."/>
            <person name="Dalin E."/>
            <person name="Tice H."/>
            <person name="Pitluck S."/>
            <person name="Chertkov O."/>
            <person name="Brettin T."/>
            <person name="Bruce D."/>
            <person name="Han C."/>
            <person name="Tapia R."/>
            <person name="Gilna P."/>
            <person name="Schmutz J."/>
            <person name="Larimer F."/>
            <person name="Land M."/>
            <person name="Hauser L."/>
            <person name="Kyrpides N."/>
            <person name="Kim E."/>
            <person name="Stahl D."/>
            <person name="Richardson P."/>
        </authorList>
    </citation>
    <scope>NUCLEOTIDE SEQUENCE [LARGE SCALE GENOMIC DNA]</scope>
    <source>
        <strain>JS42</strain>
    </source>
</reference>
<feature type="chain" id="PRO_0000305384" description="Pantothenate synthetase">
    <location>
        <begin position="1"/>
        <end position="289"/>
    </location>
</feature>
<feature type="active site" description="Proton donor" evidence="1">
    <location>
        <position position="40"/>
    </location>
</feature>
<feature type="binding site" evidence="1">
    <location>
        <begin position="33"/>
        <end position="40"/>
    </location>
    <ligand>
        <name>ATP</name>
        <dbReference type="ChEBI" id="CHEBI:30616"/>
    </ligand>
</feature>
<feature type="binding site" evidence="1">
    <location>
        <position position="64"/>
    </location>
    <ligand>
        <name>(R)-pantoate</name>
        <dbReference type="ChEBI" id="CHEBI:15980"/>
    </ligand>
</feature>
<feature type="binding site" evidence="1">
    <location>
        <position position="64"/>
    </location>
    <ligand>
        <name>beta-alanine</name>
        <dbReference type="ChEBI" id="CHEBI:57966"/>
    </ligand>
</feature>
<feature type="binding site" evidence="1">
    <location>
        <begin position="155"/>
        <end position="158"/>
    </location>
    <ligand>
        <name>ATP</name>
        <dbReference type="ChEBI" id="CHEBI:30616"/>
    </ligand>
</feature>
<feature type="binding site" evidence="1">
    <location>
        <position position="161"/>
    </location>
    <ligand>
        <name>(R)-pantoate</name>
        <dbReference type="ChEBI" id="CHEBI:15980"/>
    </ligand>
</feature>
<feature type="binding site" evidence="1">
    <location>
        <position position="184"/>
    </location>
    <ligand>
        <name>ATP</name>
        <dbReference type="ChEBI" id="CHEBI:30616"/>
    </ligand>
</feature>
<feature type="binding site" evidence="1">
    <location>
        <begin position="192"/>
        <end position="195"/>
    </location>
    <ligand>
        <name>ATP</name>
        <dbReference type="ChEBI" id="CHEBI:30616"/>
    </ligand>
</feature>
<protein>
    <recommendedName>
        <fullName evidence="1">Pantothenate synthetase</fullName>
        <shortName evidence="1">PS</shortName>
        <ecNumber evidence="1">6.3.2.1</ecNumber>
    </recommendedName>
    <alternativeName>
        <fullName evidence="1">Pantoate--beta-alanine ligase</fullName>
    </alternativeName>
    <alternativeName>
        <fullName evidence="1">Pantoate-activating enzyme</fullName>
    </alternativeName>
</protein>
<dbReference type="EC" id="6.3.2.1" evidence="1"/>
<dbReference type="EMBL" id="CP000539">
    <property type="protein sequence ID" value="ABM43613.1"/>
    <property type="molecule type" value="Genomic_DNA"/>
</dbReference>
<dbReference type="SMR" id="A1WBI8"/>
<dbReference type="STRING" id="232721.Ajs_3500"/>
<dbReference type="KEGG" id="ajs:Ajs_3500"/>
<dbReference type="eggNOG" id="COG0414">
    <property type="taxonomic scope" value="Bacteria"/>
</dbReference>
<dbReference type="HOGENOM" id="CLU_047148_0_0_4"/>
<dbReference type="UniPathway" id="UPA00028">
    <property type="reaction ID" value="UER00005"/>
</dbReference>
<dbReference type="Proteomes" id="UP000000645">
    <property type="component" value="Chromosome"/>
</dbReference>
<dbReference type="GO" id="GO:0005829">
    <property type="term" value="C:cytosol"/>
    <property type="evidence" value="ECO:0007669"/>
    <property type="project" value="TreeGrafter"/>
</dbReference>
<dbReference type="GO" id="GO:0005524">
    <property type="term" value="F:ATP binding"/>
    <property type="evidence" value="ECO:0007669"/>
    <property type="project" value="UniProtKB-KW"/>
</dbReference>
<dbReference type="GO" id="GO:0004592">
    <property type="term" value="F:pantoate-beta-alanine ligase activity"/>
    <property type="evidence" value="ECO:0007669"/>
    <property type="project" value="UniProtKB-UniRule"/>
</dbReference>
<dbReference type="GO" id="GO:0015940">
    <property type="term" value="P:pantothenate biosynthetic process"/>
    <property type="evidence" value="ECO:0007669"/>
    <property type="project" value="UniProtKB-UniRule"/>
</dbReference>
<dbReference type="Gene3D" id="3.40.50.620">
    <property type="entry name" value="HUPs"/>
    <property type="match status" value="1"/>
</dbReference>
<dbReference type="Gene3D" id="3.30.1300.10">
    <property type="entry name" value="Pantoate-beta-alanine ligase, C-terminal domain"/>
    <property type="match status" value="1"/>
</dbReference>
<dbReference type="HAMAP" id="MF_00158">
    <property type="entry name" value="PanC"/>
    <property type="match status" value="1"/>
</dbReference>
<dbReference type="InterPro" id="IPR003721">
    <property type="entry name" value="Pantoate_ligase"/>
</dbReference>
<dbReference type="InterPro" id="IPR042176">
    <property type="entry name" value="Pantoate_ligase_C"/>
</dbReference>
<dbReference type="InterPro" id="IPR014729">
    <property type="entry name" value="Rossmann-like_a/b/a_fold"/>
</dbReference>
<dbReference type="NCBIfam" id="TIGR00018">
    <property type="entry name" value="panC"/>
    <property type="match status" value="1"/>
</dbReference>
<dbReference type="PANTHER" id="PTHR21299">
    <property type="entry name" value="CYTIDYLATE KINASE/PANTOATE-BETA-ALANINE LIGASE"/>
    <property type="match status" value="1"/>
</dbReference>
<dbReference type="PANTHER" id="PTHR21299:SF1">
    <property type="entry name" value="PANTOATE--BETA-ALANINE LIGASE"/>
    <property type="match status" value="1"/>
</dbReference>
<dbReference type="Pfam" id="PF02569">
    <property type="entry name" value="Pantoate_ligase"/>
    <property type="match status" value="1"/>
</dbReference>
<dbReference type="SUPFAM" id="SSF52374">
    <property type="entry name" value="Nucleotidylyl transferase"/>
    <property type="match status" value="1"/>
</dbReference>
<name>PANC_ACISJ</name>
<organism>
    <name type="scientific">Acidovorax sp. (strain JS42)</name>
    <dbReference type="NCBI Taxonomy" id="232721"/>
    <lineage>
        <taxon>Bacteria</taxon>
        <taxon>Pseudomonadati</taxon>
        <taxon>Pseudomonadota</taxon>
        <taxon>Betaproteobacteria</taxon>
        <taxon>Burkholderiales</taxon>
        <taxon>Comamonadaceae</taxon>
        <taxon>Acidovorax</taxon>
    </lineage>
</organism>
<keyword id="KW-0067">ATP-binding</keyword>
<keyword id="KW-0963">Cytoplasm</keyword>
<keyword id="KW-0436">Ligase</keyword>
<keyword id="KW-0547">Nucleotide-binding</keyword>
<keyword id="KW-0566">Pantothenate biosynthesis</keyword>
<comment type="function">
    <text evidence="1">Catalyzes the condensation of pantoate with beta-alanine in an ATP-dependent reaction via a pantoyl-adenylate intermediate.</text>
</comment>
<comment type="catalytic activity">
    <reaction evidence="1">
        <text>(R)-pantoate + beta-alanine + ATP = (R)-pantothenate + AMP + diphosphate + H(+)</text>
        <dbReference type="Rhea" id="RHEA:10912"/>
        <dbReference type="ChEBI" id="CHEBI:15378"/>
        <dbReference type="ChEBI" id="CHEBI:15980"/>
        <dbReference type="ChEBI" id="CHEBI:29032"/>
        <dbReference type="ChEBI" id="CHEBI:30616"/>
        <dbReference type="ChEBI" id="CHEBI:33019"/>
        <dbReference type="ChEBI" id="CHEBI:57966"/>
        <dbReference type="ChEBI" id="CHEBI:456215"/>
        <dbReference type="EC" id="6.3.2.1"/>
    </reaction>
</comment>
<comment type="pathway">
    <text evidence="1">Cofactor biosynthesis; (R)-pantothenate biosynthesis; (R)-pantothenate from (R)-pantoate and beta-alanine: step 1/1.</text>
</comment>
<comment type="subunit">
    <text evidence="1">Homodimer.</text>
</comment>
<comment type="subcellular location">
    <subcellularLocation>
        <location evidence="1">Cytoplasm</location>
    </subcellularLocation>
</comment>
<comment type="miscellaneous">
    <text evidence="1">The reaction proceeds by a bi uni uni bi ping pong mechanism.</text>
</comment>
<comment type="similarity">
    <text evidence="1">Belongs to the pantothenate synthetase family.</text>
</comment>
<sequence length="289" mass="31019">MITVRTIPELRAAIAAHPGAGRPGKRPAFVPTMGNLHDGHIALVRQARPLGDVLVASIFVNRLQFLPHEDFDSYPRTWEADCAKLEAAGCDIVFAPRESDLYPEPQTFKLQPDPQLADILEGHFRPGFFTGVCTVVMKLFSAVFFASGGGTAVFGKKDYQQLMVIRRMVQQFALPVEVVAGETARADDGLALSSRNGYLSTAERVQAVQLSAALRALAQAAQAPGAPPLAALEQQALQTLAQQGWAPDYLTVRQRHDLQPPAAGAAAGTLVALGAARLGSTRLIDNLEF</sequence>
<gene>
    <name evidence="1" type="primary">panC</name>
    <name type="ordered locus">Ajs_3500</name>
</gene>